<protein>
    <recommendedName>
        <fullName evidence="1">Bifunctional protein GlmU</fullName>
    </recommendedName>
    <domain>
        <recommendedName>
            <fullName evidence="1">UDP-N-acetylglucosamine pyrophosphorylase</fullName>
            <ecNumber evidence="1">2.7.7.23</ecNumber>
        </recommendedName>
        <alternativeName>
            <fullName evidence="1">N-acetylglucosamine-1-phosphate uridyltransferase</fullName>
        </alternativeName>
    </domain>
    <domain>
        <recommendedName>
            <fullName evidence="1">Glucosamine-1-phosphate N-acetyltransferase</fullName>
            <ecNumber evidence="1">2.3.1.157</ecNumber>
        </recommendedName>
    </domain>
</protein>
<organism>
    <name type="scientific">Vibrio vulnificus (strain YJ016)</name>
    <dbReference type="NCBI Taxonomy" id="196600"/>
    <lineage>
        <taxon>Bacteria</taxon>
        <taxon>Pseudomonadati</taxon>
        <taxon>Pseudomonadota</taxon>
        <taxon>Gammaproteobacteria</taxon>
        <taxon>Vibrionales</taxon>
        <taxon>Vibrionaceae</taxon>
        <taxon>Vibrio</taxon>
    </lineage>
</organism>
<proteinExistence type="inferred from homology"/>
<gene>
    <name evidence="1" type="primary">glmU</name>
    <name type="ordered locus">VV3249</name>
</gene>
<evidence type="ECO:0000255" key="1">
    <source>
        <dbReference type="HAMAP-Rule" id="MF_01631"/>
    </source>
</evidence>
<dbReference type="EC" id="2.7.7.23" evidence="1"/>
<dbReference type="EC" id="2.3.1.157" evidence="1"/>
<dbReference type="EMBL" id="BA000037">
    <property type="protein sequence ID" value="BAC96013.1"/>
    <property type="molecule type" value="Genomic_DNA"/>
</dbReference>
<dbReference type="RefSeq" id="WP_011151442.1">
    <property type="nucleotide sequence ID" value="NC_005139.1"/>
</dbReference>
<dbReference type="SMR" id="Q7MGI2"/>
<dbReference type="STRING" id="672.VV93_v1c29710"/>
<dbReference type="KEGG" id="vvy:VV3249"/>
<dbReference type="eggNOG" id="COG1207">
    <property type="taxonomic scope" value="Bacteria"/>
</dbReference>
<dbReference type="HOGENOM" id="CLU_029499_15_2_6"/>
<dbReference type="UniPathway" id="UPA00113">
    <property type="reaction ID" value="UER00532"/>
</dbReference>
<dbReference type="UniPathway" id="UPA00113">
    <property type="reaction ID" value="UER00533"/>
</dbReference>
<dbReference type="UniPathway" id="UPA00973"/>
<dbReference type="Proteomes" id="UP000002675">
    <property type="component" value="Chromosome I"/>
</dbReference>
<dbReference type="GO" id="GO:0005737">
    <property type="term" value="C:cytoplasm"/>
    <property type="evidence" value="ECO:0007669"/>
    <property type="project" value="UniProtKB-SubCell"/>
</dbReference>
<dbReference type="GO" id="GO:0016020">
    <property type="term" value="C:membrane"/>
    <property type="evidence" value="ECO:0007669"/>
    <property type="project" value="GOC"/>
</dbReference>
<dbReference type="GO" id="GO:0019134">
    <property type="term" value="F:glucosamine-1-phosphate N-acetyltransferase activity"/>
    <property type="evidence" value="ECO:0007669"/>
    <property type="project" value="UniProtKB-UniRule"/>
</dbReference>
<dbReference type="GO" id="GO:0000287">
    <property type="term" value="F:magnesium ion binding"/>
    <property type="evidence" value="ECO:0007669"/>
    <property type="project" value="UniProtKB-UniRule"/>
</dbReference>
<dbReference type="GO" id="GO:0003977">
    <property type="term" value="F:UDP-N-acetylglucosamine diphosphorylase activity"/>
    <property type="evidence" value="ECO:0007669"/>
    <property type="project" value="UniProtKB-UniRule"/>
</dbReference>
<dbReference type="GO" id="GO:0000902">
    <property type="term" value="P:cell morphogenesis"/>
    <property type="evidence" value="ECO:0007669"/>
    <property type="project" value="UniProtKB-UniRule"/>
</dbReference>
<dbReference type="GO" id="GO:0071555">
    <property type="term" value="P:cell wall organization"/>
    <property type="evidence" value="ECO:0007669"/>
    <property type="project" value="UniProtKB-KW"/>
</dbReference>
<dbReference type="GO" id="GO:0009245">
    <property type="term" value="P:lipid A biosynthetic process"/>
    <property type="evidence" value="ECO:0007669"/>
    <property type="project" value="UniProtKB-UniRule"/>
</dbReference>
<dbReference type="GO" id="GO:0009252">
    <property type="term" value="P:peptidoglycan biosynthetic process"/>
    <property type="evidence" value="ECO:0007669"/>
    <property type="project" value="UniProtKB-UniRule"/>
</dbReference>
<dbReference type="GO" id="GO:0008360">
    <property type="term" value="P:regulation of cell shape"/>
    <property type="evidence" value="ECO:0007669"/>
    <property type="project" value="UniProtKB-KW"/>
</dbReference>
<dbReference type="GO" id="GO:0006048">
    <property type="term" value="P:UDP-N-acetylglucosamine biosynthetic process"/>
    <property type="evidence" value="ECO:0007669"/>
    <property type="project" value="UniProtKB-UniPathway"/>
</dbReference>
<dbReference type="CDD" id="cd02540">
    <property type="entry name" value="GT2_GlmU_N_bac"/>
    <property type="match status" value="1"/>
</dbReference>
<dbReference type="CDD" id="cd03353">
    <property type="entry name" value="LbH_GlmU_C"/>
    <property type="match status" value="1"/>
</dbReference>
<dbReference type="FunFam" id="3.90.550.10:FF:000006">
    <property type="entry name" value="Bifunctional protein GlmU"/>
    <property type="match status" value="1"/>
</dbReference>
<dbReference type="Gene3D" id="2.160.10.10">
    <property type="entry name" value="Hexapeptide repeat proteins"/>
    <property type="match status" value="1"/>
</dbReference>
<dbReference type="Gene3D" id="3.90.550.10">
    <property type="entry name" value="Spore Coat Polysaccharide Biosynthesis Protein SpsA, Chain A"/>
    <property type="match status" value="1"/>
</dbReference>
<dbReference type="HAMAP" id="MF_01631">
    <property type="entry name" value="GlmU"/>
    <property type="match status" value="1"/>
</dbReference>
<dbReference type="InterPro" id="IPR005882">
    <property type="entry name" value="Bifunctional_GlmU"/>
</dbReference>
<dbReference type="InterPro" id="IPR050065">
    <property type="entry name" value="GlmU-like"/>
</dbReference>
<dbReference type="InterPro" id="IPR038009">
    <property type="entry name" value="GlmU_C_LbH"/>
</dbReference>
<dbReference type="InterPro" id="IPR001451">
    <property type="entry name" value="Hexapep"/>
</dbReference>
<dbReference type="InterPro" id="IPR018357">
    <property type="entry name" value="Hexapep_transf_CS"/>
</dbReference>
<dbReference type="InterPro" id="IPR025877">
    <property type="entry name" value="MobA-like_NTP_Trfase"/>
</dbReference>
<dbReference type="InterPro" id="IPR029044">
    <property type="entry name" value="Nucleotide-diphossugar_trans"/>
</dbReference>
<dbReference type="InterPro" id="IPR011004">
    <property type="entry name" value="Trimer_LpxA-like_sf"/>
</dbReference>
<dbReference type="NCBIfam" id="TIGR01173">
    <property type="entry name" value="glmU"/>
    <property type="match status" value="1"/>
</dbReference>
<dbReference type="NCBIfam" id="NF006986">
    <property type="entry name" value="PRK09451.1"/>
    <property type="match status" value="1"/>
</dbReference>
<dbReference type="PANTHER" id="PTHR43584:SF3">
    <property type="entry name" value="BIFUNCTIONAL PROTEIN GLMU"/>
    <property type="match status" value="1"/>
</dbReference>
<dbReference type="PANTHER" id="PTHR43584">
    <property type="entry name" value="NUCLEOTIDYL TRANSFERASE"/>
    <property type="match status" value="1"/>
</dbReference>
<dbReference type="Pfam" id="PF00132">
    <property type="entry name" value="Hexapep"/>
    <property type="match status" value="1"/>
</dbReference>
<dbReference type="Pfam" id="PF14602">
    <property type="entry name" value="Hexapep_2"/>
    <property type="match status" value="1"/>
</dbReference>
<dbReference type="Pfam" id="PF12804">
    <property type="entry name" value="NTP_transf_3"/>
    <property type="match status" value="1"/>
</dbReference>
<dbReference type="SUPFAM" id="SSF53448">
    <property type="entry name" value="Nucleotide-diphospho-sugar transferases"/>
    <property type="match status" value="1"/>
</dbReference>
<dbReference type="SUPFAM" id="SSF51161">
    <property type="entry name" value="Trimeric LpxA-like enzymes"/>
    <property type="match status" value="1"/>
</dbReference>
<dbReference type="PROSITE" id="PS00101">
    <property type="entry name" value="HEXAPEP_TRANSFERASES"/>
    <property type="match status" value="1"/>
</dbReference>
<sequence>MKFSAVILAAGKGTRMYSNMPKVLHTLAGKPMVKHVIDTCTGLGAQNIHLVYGHGGDQMQAALAEEPVNWVLQAEQLGTGHAVDQASPQFEDDEKILVLYGDVPLISSETIESLLDAQPKGGIALLTVVLDNPTGYGRIVRKNGPVVAIVEQKDANEEQKLIKEINTGVMVATGGDLKRWLAGLNNDNAQGEYYLTDVIAAAHDEGNAVEAVHPVSPIEVEGVNDRAQLARLERAFQAAQAKKLLEQGVMLRDPARFDLRGELQCGLDVEIDVNVIIEGNVSLGDNVVIGAGCVLKDCEIDDNTIVRPYSVIEGATVGEQCTVGPFTRLRPGAEMRNDSHVGNFVEVKNACIGEGSKANHLTYLGDAEIGQRTNIGAGTITCNYDGANKFKTIIGNDVFVGSDSQLVAPVTIADGATIGAGTTLTKDVAEGELVITRAKERKITGWQRPVKKK</sequence>
<name>GLMU_VIBVY</name>
<accession>Q7MGI2</accession>
<comment type="function">
    <text evidence="1">Catalyzes the last two sequential reactions in the de novo biosynthetic pathway for UDP-N-acetylglucosamine (UDP-GlcNAc). The C-terminal domain catalyzes the transfer of acetyl group from acetyl coenzyme A to glucosamine-1-phosphate (GlcN-1-P) to produce N-acetylglucosamine-1-phosphate (GlcNAc-1-P), which is converted into UDP-GlcNAc by the transfer of uridine 5-monophosphate (from uridine 5-triphosphate), a reaction catalyzed by the N-terminal domain.</text>
</comment>
<comment type="catalytic activity">
    <reaction evidence="1">
        <text>alpha-D-glucosamine 1-phosphate + acetyl-CoA = N-acetyl-alpha-D-glucosamine 1-phosphate + CoA + H(+)</text>
        <dbReference type="Rhea" id="RHEA:13725"/>
        <dbReference type="ChEBI" id="CHEBI:15378"/>
        <dbReference type="ChEBI" id="CHEBI:57287"/>
        <dbReference type="ChEBI" id="CHEBI:57288"/>
        <dbReference type="ChEBI" id="CHEBI:57776"/>
        <dbReference type="ChEBI" id="CHEBI:58516"/>
        <dbReference type="EC" id="2.3.1.157"/>
    </reaction>
</comment>
<comment type="catalytic activity">
    <reaction evidence="1">
        <text>N-acetyl-alpha-D-glucosamine 1-phosphate + UTP + H(+) = UDP-N-acetyl-alpha-D-glucosamine + diphosphate</text>
        <dbReference type="Rhea" id="RHEA:13509"/>
        <dbReference type="ChEBI" id="CHEBI:15378"/>
        <dbReference type="ChEBI" id="CHEBI:33019"/>
        <dbReference type="ChEBI" id="CHEBI:46398"/>
        <dbReference type="ChEBI" id="CHEBI:57705"/>
        <dbReference type="ChEBI" id="CHEBI:57776"/>
        <dbReference type="EC" id="2.7.7.23"/>
    </reaction>
</comment>
<comment type="cofactor">
    <cofactor evidence="1">
        <name>Mg(2+)</name>
        <dbReference type="ChEBI" id="CHEBI:18420"/>
    </cofactor>
    <text evidence="1">Binds 1 Mg(2+) ion per subunit.</text>
</comment>
<comment type="pathway">
    <text evidence="1">Nucleotide-sugar biosynthesis; UDP-N-acetyl-alpha-D-glucosamine biosynthesis; N-acetyl-alpha-D-glucosamine 1-phosphate from alpha-D-glucosamine 6-phosphate (route II): step 2/2.</text>
</comment>
<comment type="pathway">
    <text evidence="1">Nucleotide-sugar biosynthesis; UDP-N-acetyl-alpha-D-glucosamine biosynthesis; UDP-N-acetyl-alpha-D-glucosamine from N-acetyl-alpha-D-glucosamine 1-phosphate: step 1/1.</text>
</comment>
<comment type="pathway">
    <text evidence="1">Bacterial outer membrane biogenesis; LPS lipid A biosynthesis.</text>
</comment>
<comment type="subunit">
    <text evidence="1">Homotrimer.</text>
</comment>
<comment type="subcellular location">
    <subcellularLocation>
        <location evidence="1">Cytoplasm</location>
    </subcellularLocation>
</comment>
<comment type="similarity">
    <text evidence="1">In the N-terminal section; belongs to the N-acetylglucosamine-1-phosphate uridyltransferase family.</text>
</comment>
<comment type="similarity">
    <text evidence="1">In the C-terminal section; belongs to the transferase hexapeptide repeat family.</text>
</comment>
<keyword id="KW-0012">Acyltransferase</keyword>
<keyword id="KW-0133">Cell shape</keyword>
<keyword id="KW-0961">Cell wall biogenesis/degradation</keyword>
<keyword id="KW-0963">Cytoplasm</keyword>
<keyword id="KW-0460">Magnesium</keyword>
<keyword id="KW-0479">Metal-binding</keyword>
<keyword id="KW-0511">Multifunctional enzyme</keyword>
<keyword id="KW-0548">Nucleotidyltransferase</keyword>
<keyword id="KW-0573">Peptidoglycan synthesis</keyword>
<keyword id="KW-0677">Repeat</keyword>
<keyword id="KW-0808">Transferase</keyword>
<reference key="1">
    <citation type="journal article" date="2003" name="Genome Res.">
        <title>Comparative genome analysis of Vibrio vulnificus, a marine pathogen.</title>
        <authorList>
            <person name="Chen C.-Y."/>
            <person name="Wu K.-M."/>
            <person name="Chang Y.-C."/>
            <person name="Chang C.-H."/>
            <person name="Tsai H.-C."/>
            <person name="Liao T.-L."/>
            <person name="Liu Y.-M."/>
            <person name="Chen H.-J."/>
            <person name="Shen A.B.-T."/>
            <person name="Li J.-C."/>
            <person name="Su T.-L."/>
            <person name="Shao C.-P."/>
            <person name="Lee C.-T."/>
            <person name="Hor L.-I."/>
            <person name="Tsai S.-F."/>
        </authorList>
    </citation>
    <scope>NUCLEOTIDE SEQUENCE [LARGE SCALE GENOMIC DNA]</scope>
    <source>
        <strain>YJ016</strain>
    </source>
</reference>
<feature type="chain" id="PRO_0000233876" description="Bifunctional protein GlmU">
    <location>
        <begin position="1"/>
        <end position="453"/>
    </location>
</feature>
<feature type="region of interest" description="Pyrophosphorylase" evidence="1">
    <location>
        <begin position="1"/>
        <end position="226"/>
    </location>
</feature>
<feature type="region of interest" description="Linker" evidence="1">
    <location>
        <begin position="227"/>
        <end position="247"/>
    </location>
</feature>
<feature type="region of interest" description="N-acetyltransferase" evidence="1">
    <location>
        <begin position="248"/>
        <end position="453"/>
    </location>
</feature>
<feature type="active site" description="Proton acceptor" evidence="1">
    <location>
        <position position="360"/>
    </location>
</feature>
<feature type="binding site" evidence="1">
    <location>
        <begin position="8"/>
        <end position="11"/>
    </location>
    <ligand>
        <name>UDP-N-acetyl-alpha-D-glucosamine</name>
        <dbReference type="ChEBI" id="CHEBI:57705"/>
    </ligand>
</feature>
<feature type="binding site" evidence="1">
    <location>
        <position position="22"/>
    </location>
    <ligand>
        <name>UDP-N-acetyl-alpha-D-glucosamine</name>
        <dbReference type="ChEBI" id="CHEBI:57705"/>
    </ligand>
</feature>
<feature type="binding site" evidence="1">
    <location>
        <position position="73"/>
    </location>
    <ligand>
        <name>UDP-N-acetyl-alpha-D-glucosamine</name>
        <dbReference type="ChEBI" id="CHEBI:57705"/>
    </ligand>
</feature>
<feature type="binding site" evidence="1">
    <location>
        <begin position="78"/>
        <end position="79"/>
    </location>
    <ligand>
        <name>UDP-N-acetyl-alpha-D-glucosamine</name>
        <dbReference type="ChEBI" id="CHEBI:57705"/>
    </ligand>
</feature>
<feature type="binding site" evidence="1">
    <location>
        <begin position="100"/>
        <end position="102"/>
    </location>
    <ligand>
        <name>UDP-N-acetyl-alpha-D-glucosamine</name>
        <dbReference type="ChEBI" id="CHEBI:57705"/>
    </ligand>
</feature>
<feature type="binding site" evidence="1">
    <location>
        <position position="102"/>
    </location>
    <ligand>
        <name>Mg(2+)</name>
        <dbReference type="ChEBI" id="CHEBI:18420"/>
    </ligand>
</feature>
<feature type="binding site" evidence="1">
    <location>
        <position position="137"/>
    </location>
    <ligand>
        <name>UDP-N-acetyl-alpha-D-glucosamine</name>
        <dbReference type="ChEBI" id="CHEBI:57705"/>
    </ligand>
</feature>
<feature type="binding site" evidence="1">
    <location>
        <position position="151"/>
    </location>
    <ligand>
        <name>UDP-N-acetyl-alpha-D-glucosamine</name>
        <dbReference type="ChEBI" id="CHEBI:57705"/>
    </ligand>
</feature>
<feature type="binding site" evidence="1">
    <location>
        <position position="166"/>
    </location>
    <ligand>
        <name>UDP-N-acetyl-alpha-D-glucosamine</name>
        <dbReference type="ChEBI" id="CHEBI:57705"/>
    </ligand>
</feature>
<feature type="binding site" evidence="1">
    <location>
        <position position="224"/>
    </location>
    <ligand>
        <name>Mg(2+)</name>
        <dbReference type="ChEBI" id="CHEBI:18420"/>
    </ligand>
</feature>
<feature type="binding site" evidence="1">
    <location>
        <position position="224"/>
    </location>
    <ligand>
        <name>UDP-N-acetyl-alpha-D-glucosamine</name>
        <dbReference type="ChEBI" id="CHEBI:57705"/>
    </ligand>
</feature>
<feature type="binding site" evidence="1">
    <location>
        <position position="330"/>
    </location>
    <ligand>
        <name>UDP-N-acetyl-alpha-D-glucosamine</name>
        <dbReference type="ChEBI" id="CHEBI:57705"/>
    </ligand>
</feature>
<feature type="binding site" evidence="1">
    <location>
        <position position="348"/>
    </location>
    <ligand>
        <name>UDP-N-acetyl-alpha-D-glucosamine</name>
        <dbReference type="ChEBI" id="CHEBI:57705"/>
    </ligand>
</feature>
<feature type="binding site" evidence="1">
    <location>
        <position position="363"/>
    </location>
    <ligand>
        <name>UDP-N-acetyl-alpha-D-glucosamine</name>
        <dbReference type="ChEBI" id="CHEBI:57705"/>
    </ligand>
</feature>
<feature type="binding site" evidence="1">
    <location>
        <position position="374"/>
    </location>
    <ligand>
        <name>UDP-N-acetyl-alpha-D-glucosamine</name>
        <dbReference type="ChEBI" id="CHEBI:57705"/>
    </ligand>
</feature>
<feature type="binding site" evidence="1">
    <location>
        <position position="377"/>
    </location>
    <ligand>
        <name>acetyl-CoA</name>
        <dbReference type="ChEBI" id="CHEBI:57288"/>
    </ligand>
</feature>
<feature type="binding site" evidence="1">
    <location>
        <begin position="383"/>
        <end position="384"/>
    </location>
    <ligand>
        <name>acetyl-CoA</name>
        <dbReference type="ChEBI" id="CHEBI:57288"/>
    </ligand>
</feature>
<feature type="binding site" evidence="1">
    <location>
        <position position="402"/>
    </location>
    <ligand>
        <name>acetyl-CoA</name>
        <dbReference type="ChEBI" id="CHEBI:57288"/>
    </ligand>
</feature>
<feature type="binding site" evidence="1">
    <location>
        <position position="420"/>
    </location>
    <ligand>
        <name>acetyl-CoA</name>
        <dbReference type="ChEBI" id="CHEBI:57288"/>
    </ligand>
</feature>
<feature type="binding site" evidence="1">
    <location>
        <position position="437"/>
    </location>
    <ligand>
        <name>acetyl-CoA</name>
        <dbReference type="ChEBI" id="CHEBI:57288"/>
    </ligand>
</feature>